<name>GOME_ACAGO</name>
<comment type="function">
    <text evidence="1">Active against several Gram-positive bacteria such as Bacillus spp, Staphylococcus spp and E.faecalis, several Gram-negative bacteria such as E.coli, K.pneumoniae, P.aeruginosa and Salmonella spp, filamentous fungi such as N.crassa, T.viridae and yeasts such as C.albicans. It is active against the parasite L.amazonensis as well. It shows hemolytic activity.</text>
</comment>
<comment type="subcellular location">
    <subcellularLocation>
        <location evidence="1">Secreted</location>
    </subcellularLocation>
</comment>
<comment type="tissue specificity">
    <text evidence="1 2">In hemocytes only, but not in all hemocytes observed.</text>
</comment>
<comment type="mass spectrometry" mass="2270.4" method="MALDI" evidence="1"/>
<keyword id="KW-0002">3D-structure</keyword>
<keyword id="KW-0027">Amidation</keyword>
<keyword id="KW-0044">Antibiotic</keyword>
<keyword id="KW-0929">Antimicrobial</keyword>
<keyword id="KW-0165">Cleavage on pair of basic residues</keyword>
<keyword id="KW-0204">Cytolysis</keyword>
<keyword id="KW-0903">Direct protein sequencing</keyword>
<keyword id="KW-1015">Disulfide bond</keyword>
<keyword id="KW-0295">Fungicide</keyword>
<keyword id="KW-0354">Hemolysis</keyword>
<keyword id="KW-0391">Immunity</keyword>
<keyword id="KW-0399">Innate immunity</keyword>
<keyword id="KW-0873">Pyrrolidone carboxylic acid</keyword>
<keyword id="KW-0964">Secreted</keyword>
<keyword id="KW-0732">Signal</keyword>
<protein>
    <recommendedName>
        <fullName evidence="3 4 5">Gomesin</fullName>
    </recommendedName>
</protein>
<evidence type="ECO:0000269" key="1">
    <source>
    </source>
</evidence>
<evidence type="ECO:0000269" key="2">
    <source>
    </source>
</evidence>
<evidence type="ECO:0000303" key="3">
    <source>
    </source>
</evidence>
<evidence type="ECO:0000303" key="4">
    <source>
    </source>
</evidence>
<evidence type="ECO:0000303" key="5">
    <source>
    </source>
</evidence>
<evidence type="ECO:0007829" key="6">
    <source>
        <dbReference type="PDB" id="1KFP"/>
    </source>
</evidence>
<organism>
    <name type="scientific">Acanthoscurria gomesiana</name>
    <name type="common">Tarantula spider</name>
    <name type="synonym">Phormictopus pheopygus</name>
    <dbReference type="NCBI Taxonomy" id="115339"/>
    <lineage>
        <taxon>Eukaryota</taxon>
        <taxon>Metazoa</taxon>
        <taxon>Ecdysozoa</taxon>
        <taxon>Arthropoda</taxon>
        <taxon>Chelicerata</taxon>
        <taxon>Arachnida</taxon>
        <taxon>Araneae</taxon>
        <taxon>Mygalomorphae</taxon>
        <taxon>Theraphosidae</taxon>
        <taxon>Acanthoscurria</taxon>
    </lineage>
</organism>
<proteinExistence type="evidence at protein level"/>
<sequence length="84" mass="9688">MNRTRLFACLLLAVLILVHESNAQCRRLCYKQRCVTYCRGRGKRSLDETNVGTSDVEKRAFDDSNVPSLVEERELEDEGSFIFD</sequence>
<dbReference type="EMBL" id="AJ544540">
    <property type="protein sequence ID" value="CAD67587.1"/>
    <property type="molecule type" value="mRNA"/>
</dbReference>
<dbReference type="PDB" id="1KFP">
    <property type="method" value="NMR"/>
    <property type="chains" value="A=24-41"/>
</dbReference>
<dbReference type="PDB" id="6MY1">
    <property type="method" value="NMR"/>
    <property type="chains" value="A=24-41"/>
</dbReference>
<dbReference type="PDB" id="6MY2">
    <property type="method" value="NMR"/>
    <property type="chains" value="A=24-41"/>
</dbReference>
<dbReference type="PDB" id="6MY3">
    <property type="method" value="NMR"/>
    <property type="chains" value="A=24-41"/>
</dbReference>
<dbReference type="PDBsum" id="1KFP"/>
<dbReference type="PDBsum" id="6MY1"/>
<dbReference type="PDBsum" id="6MY2"/>
<dbReference type="PDBsum" id="6MY3"/>
<dbReference type="BMRB" id="P82358"/>
<dbReference type="SMR" id="P82358"/>
<dbReference type="TCDB" id="1.C.34.3.1">
    <property type="family name" value="the tachyplesin (tachyplesin) family"/>
</dbReference>
<dbReference type="EvolutionaryTrace" id="P82358"/>
<dbReference type="GO" id="GO:0005576">
    <property type="term" value="C:extracellular region"/>
    <property type="evidence" value="ECO:0007669"/>
    <property type="project" value="UniProtKB-SubCell"/>
</dbReference>
<dbReference type="GO" id="GO:0042742">
    <property type="term" value="P:defense response to bacterium"/>
    <property type="evidence" value="ECO:0007669"/>
    <property type="project" value="UniProtKB-KW"/>
</dbReference>
<dbReference type="GO" id="GO:0050832">
    <property type="term" value="P:defense response to fungus"/>
    <property type="evidence" value="ECO:0007669"/>
    <property type="project" value="UniProtKB-KW"/>
</dbReference>
<dbReference type="GO" id="GO:0045087">
    <property type="term" value="P:innate immune response"/>
    <property type="evidence" value="ECO:0007669"/>
    <property type="project" value="UniProtKB-KW"/>
</dbReference>
<dbReference type="GO" id="GO:0031640">
    <property type="term" value="P:killing of cells of another organism"/>
    <property type="evidence" value="ECO:0007669"/>
    <property type="project" value="UniProtKB-KW"/>
</dbReference>
<feature type="signal peptide" evidence="1">
    <location>
        <begin position="1"/>
        <end position="23"/>
    </location>
</feature>
<feature type="peptide" id="PRO_0000021338" description="Gomesin" evidence="1">
    <location>
        <begin position="24"/>
        <end position="41"/>
    </location>
</feature>
<feature type="propeptide" id="PRO_0000021339" evidence="1">
    <location>
        <begin position="42"/>
        <end position="84"/>
    </location>
</feature>
<feature type="modified residue" description="Pyrrolidone carboxylic acid" evidence="1 2">
    <location>
        <position position="24"/>
    </location>
</feature>
<feature type="modified residue" description="Arginine amide" evidence="1 2">
    <location>
        <position position="41"/>
    </location>
</feature>
<feature type="disulfide bond" evidence="1">
    <location>
        <begin position="25"/>
        <end position="38"/>
    </location>
</feature>
<feature type="disulfide bond" evidence="1">
    <location>
        <begin position="29"/>
        <end position="34"/>
    </location>
</feature>
<feature type="strand" evidence="6">
    <location>
        <begin position="25"/>
        <end position="30"/>
    </location>
</feature>
<feature type="strand" evidence="6">
    <location>
        <begin position="33"/>
        <end position="38"/>
    </location>
</feature>
<reference key="1">
    <citation type="journal article" date="2003" name="Insect Biochem. Mol. Biol.">
        <title>Molecular cloning, expression analysis and cellular localization of gomesin, an anti-microbial peptide from hemocytes of the spider Acanthoscurria gomesiana.</title>
        <authorList>
            <person name="Lorenzini D.M."/>
            <person name="Fukuzawa A.H."/>
            <person name="da Silva P.I. Jr."/>
            <person name="Machado-Santelli G."/>
            <person name="Bijovsky A.T."/>
            <person name="Daffre S."/>
        </authorList>
    </citation>
    <scope>NUCLEOTIDE SEQUENCE [MRNA]</scope>
    <scope>TISSUE SPECIFICITY</scope>
    <scope>PYROGLUTAMATE FORMATION AT GLN-24</scope>
    <scope>AMIDATION AT ARG-41</scope>
    <source>
        <tissue>Hemocyte</tissue>
    </source>
</reference>
<reference key="2">
    <citation type="journal article" date="2000" name="J. Biol. Chem.">
        <title>Isolation and characterization of gomesin, an 18-residue cysteine-rich defense peptide from the spider Acanthoscurria gomesiana hemocytes with sequence similarities to horseshoe crab antimicrobial peptides of the tachyplesin family.</title>
        <authorList>
            <person name="Silva P.I. Jr."/>
            <person name="Daffre S."/>
            <person name="Bulet P."/>
        </authorList>
    </citation>
    <scope>PROTEIN SEQUENCE OF 24-41</scope>
    <scope>CHARACTERIZATION</scope>
    <scope>MASS SPECTROMETRY</scope>
    <scope>FUNCTION</scope>
    <scope>TISSUE SPECIFICITY</scope>
    <scope>PYROGLUTAMATE FORMATION AT GLN-24</scope>
    <scope>AMIDATION AT ARG-41</scope>
    <scope>DISULFIDE BONDS</scope>
    <scope>SUBCELLULAR LOCATION</scope>
    <source>
        <tissue>Hemocyte</tissue>
    </source>
</reference>
<reference key="3">
    <citation type="journal article" date="2002" name="Eur. J. Biochem.">
        <title>The solution structure of gomesin, an antimicrobial cysteine-rich peptide from the spider.</title>
        <authorList>
            <person name="Mandard N."/>
            <person name="Bulet P."/>
            <person name="Caille A."/>
            <person name="Daffre S."/>
            <person name="Vovelle F."/>
        </authorList>
    </citation>
    <scope>STRUCTURE BY NMR OF 24-41</scope>
</reference>
<accession>P82358</accession>
<accession>Q86RA2</accession>